<comment type="function">
    <text evidence="1">Catalyzes the excretion of spermidine.</text>
</comment>
<comment type="subunit">
    <text evidence="1">Forms a complex with MdtI.</text>
</comment>
<comment type="subcellular location">
    <subcellularLocation>
        <location evidence="1">Cell inner membrane</location>
        <topology evidence="1">Multi-pass membrane protein</topology>
    </subcellularLocation>
</comment>
<comment type="similarity">
    <text evidence="1">Belongs to the drug/metabolite transporter (DMT) superfamily. Small multidrug resistance (SMR) (TC 2.A.7.1) family. MdtJ subfamily.</text>
</comment>
<sequence>MYIYWILLGLAIATEITGTLSMKWASVSEGNGGFILMLVMISLSYIFLSFAVKKIALGVAYALWEGIGILFITLFSVLLFDESLSLMKIAGLTTLVAGIVLIKSGTRKARKPELEVNHGAV</sequence>
<protein>
    <recommendedName>
        <fullName evidence="1">Spermidine export protein MdtJ</fullName>
    </recommendedName>
</protein>
<dbReference type="EMBL" id="CP000247">
    <property type="protein sequence ID" value="ABG69551.1"/>
    <property type="molecule type" value="Genomic_DNA"/>
</dbReference>
<dbReference type="RefSeq" id="WP_000276149.1">
    <property type="nucleotide sequence ID" value="NC_008253.1"/>
</dbReference>
<dbReference type="SMR" id="Q0THM8"/>
<dbReference type="GeneID" id="93775748"/>
<dbReference type="KEGG" id="ecp:ECP_1544"/>
<dbReference type="HOGENOM" id="CLU_133067_0_0_6"/>
<dbReference type="Proteomes" id="UP000009182">
    <property type="component" value="Chromosome"/>
</dbReference>
<dbReference type="GO" id="GO:0005886">
    <property type="term" value="C:plasma membrane"/>
    <property type="evidence" value="ECO:0007669"/>
    <property type="project" value="UniProtKB-SubCell"/>
</dbReference>
<dbReference type="GO" id="GO:0015199">
    <property type="term" value="F:amino-acid betaine transmembrane transporter activity"/>
    <property type="evidence" value="ECO:0007669"/>
    <property type="project" value="TreeGrafter"/>
</dbReference>
<dbReference type="GO" id="GO:0015297">
    <property type="term" value="F:antiporter activity"/>
    <property type="evidence" value="ECO:0007669"/>
    <property type="project" value="TreeGrafter"/>
</dbReference>
<dbReference type="GO" id="GO:0015220">
    <property type="term" value="F:choline transmembrane transporter activity"/>
    <property type="evidence" value="ECO:0007669"/>
    <property type="project" value="TreeGrafter"/>
</dbReference>
<dbReference type="GO" id="GO:0015606">
    <property type="term" value="F:spermidine transmembrane transporter activity"/>
    <property type="evidence" value="ECO:0007669"/>
    <property type="project" value="UniProtKB-UniRule"/>
</dbReference>
<dbReference type="GO" id="GO:0031460">
    <property type="term" value="P:glycine betaine transport"/>
    <property type="evidence" value="ECO:0007669"/>
    <property type="project" value="TreeGrafter"/>
</dbReference>
<dbReference type="FunFam" id="1.10.3730.20:FF:000001">
    <property type="entry name" value="Quaternary ammonium compound resistance transporter SugE"/>
    <property type="match status" value="1"/>
</dbReference>
<dbReference type="Gene3D" id="1.10.3730.20">
    <property type="match status" value="1"/>
</dbReference>
<dbReference type="HAMAP" id="MF_01598">
    <property type="entry name" value="MdtJ"/>
    <property type="match status" value="1"/>
</dbReference>
<dbReference type="InterPro" id="IPR000390">
    <property type="entry name" value="Small_drug/metabolite_transptr"/>
</dbReference>
<dbReference type="InterPro" id="IPR045324">
    <property type="entry name" value="Small_multidrug_res"/>
</dbReference>
<dbReference type="InterPro" id="IPR023740">
    <property type="entry name" value="Spermidine_export_MdtJ"/>
</dbReference>
<dbReference type="NCBIfam" id="NF007767">
    <property type="entry name" value="PRK10452.1"/>
    <property type="match status" value="1"/>
</dbReference>
<dbReference type="PANTHER" id="PTHR30561">
    <property type="entry name" value="SMR FAMILY PROTON-DEPENDENT DRUG EFFLUX TRANSPORTER SUGE"/>
    <property type="match status" value="1"/>
</dbReference>
<dbReference type="PANTHER" id="PTHR30561:SF2">
    <property type="entry name" value="SPERMIDINE EXPORT PROTEIN MDTJ"/>
    <property type="match status" value="1"/>
</dbReference>
<dbReference type="Pfam" id="PF00893">
    <property type="entry name" value="Multi_Drug_Res"/>
    <property type="match status" value="1"/>
</dbReference>
<dbReference type="SUPFAM" id="SSF103481">
    <property type="entry name" value="Multidrug resistance efflux transporter EmrE"/>
    <property type="match status" value="1"/>
</dbReference>
<organism>
    <name type="scientific">Escherichia coli O6:K15:H31 (strain 536 / UPEC)</name>
    <dbReference type="NCBI Taxonomy" id="362663"/>
    <lineage>
        <taxon>Bacteria</taxon>
        <taxon>Pseudomonadati</taxon>
        <taxon>Pseudomonadota</taxon>
        <taxon>Gammaproteobacteria</taxon>
        <taxon>Enterobacterales</taxon>
        <taxon>Enterobacteriaceae</taxon>
        <taxon>Escherichia</taxon>
    </lineage>
</organism>
<proteinExistence type="inferred from homology"/>
<reference key="1">
    <citation type="journal article" date="2006" name="Mol. Microbiol.">
        <title>Role of pathogenicity island-associated integrases in the genome plasticity of uropathogenic Escherichia coli strain 536.</title>
        <authorList>
            <person name="Hochhut B."/>
            <person name="Wilde C."/>
            <person name="Balling G."/>
            <person name="Middendorf B."/>
            <person name="Dobrindt U."/>
            <person name="Brzuszkiewicz E."/>
            <person name="Gottschalk G."/>
            <person name="Carniel E."/>
            <person name="Hacker J."/>
        </authorList>
    </citation>
    <scope>NUCLEOTIDE SEQUENCE [LARGE SCALE GENOMIC DNA]</scope>
    <source>
        <strain>536 / UPEC</strain>
    </source>
</reference>
<feature type="chain" id="PRO_0000331169" description="Spermidine export protein MdtJ">
    <location>
        <begin position="1"/>
        <end position="121"/>
    </location>
</feature>
<feature type="transmembrane region" description="Helical" evidence="1">
    <location>
        <begin position="1"/>
        <end position="21"/>
    </location>
</feature>
<feature type="transmembrane region" description="Helical" evidence="1">
    <location>
        <begin position="32"/>
        <end position="52"/>
    </location>
</feature>
<feature type="transmembrane region" description="Helical" evidence="1">
    <location>
        <begin position="55"/>
        <end position="75"/>
    </location>
</feature>
<feature type="transmembrane region" description="Helical" evidence="1">
    <location>
        <begin position="82"/>
        <end position="102"/>
    </location>
</feature>
<accession>Q0THM8</accession>
<gene>
    <name evidence="1" type="primary">mdtJ</name>
    <name type="ordered locus">ECP_1544</name>
</gene>
<keyword id="KW-0997">Cell inner membrane</keyword>
<keyword id="KW-1003">Cell membrane</keyword>
<keyword id="KW-0472">Membrane</keyword>
<keyword id="KW-0812">Transmembrane</keyword>
<keyword id="KW-1133">Transmembrane helix</keyword>
<keyword id="KW-0813">Transport</keyword>
<evidence type="ECO:0000255" key="1">
    <source>
        <dbReference type="HAMAP-Rule" id="MF_01598"/>
    </source>
</evidence>
<name>MDTJ_ECOL5</name>